<feature type="chain" id="PRO_0000260927" description="Large ribosomal subunit protein uL6">
    <location>
        <begin position="1"/>
        <end position="179"/>
    </location>
</feature>
<organism>
    <name type="scientific">Rhodococcus jostii (strain RHA1)</name>
    <dbReference type="NCBI Taxonomy" id="101510"/>
    <lineage>
        <taxon>Bacteria</taxon>
        <taxon>Bacillati</taxon>
        <taxon>Actinomycetota</taxon>
        <taxon>Actinomycetes</taxon>
        <taxon>Mycobacteriales</taxon>
        <taxon>Nocardiaceae</taxon>
        <taxon>Rhodococcus</taxon>
    </lineage>
</organism>
<sequence>MSRIGKIPVTVPGGVDVSIDGQDVTVKGPKGSLALTISEPIAIAKNDDGTLSVTRPDDERRSRALHGLSRTLVQNLITGVTDGYTTKMEIHGVGYRVALKGKDLEFALGYSHPVPIEAPEGITFAVESPTKFSVSGIDKQKVGQISANIRRLRRPDPYKGKGVRYEGEQIRRKVGKTGK</sequence>
<gene>
    <name evidence="1" type="primary">rplF</name>
    <name type="ordered locus">RHA1_ro06148</name>
</gene>
<comment type="function">
    <text evidence="1">This protein binds to the 23S rRNA, and is important in its secondary structure. It is located near the subunit interface in the base of the L7/L12 stalk, and near the tRNA binding site of the peptidyltransferase center.</text>
</comment>
<comment type="subunit">
    <text evidence="1">Part of the 50S ribosomal subunit.</text>
</comment>
<comment type="similarity">
    <text evidence="1">Belongs to the universal ribosomal protein uL6 family.</text>
</comment>
<keyword id="KW-0687">Ribonucleoprotein</keyword>
<keyword id="KW-0689">Ribosomal protein</keyword>
<keyword id="KW-0694">RNA-binding</keyword>
<keyword id="KW-0699">rRNA-binding</keyword>
<reference key="1">
    <citation type="journal article" date="2006" name="Proc. Natl. Acad. Sci. U.S.A.">
        <title>The complete genome of Rhodococcus sp. RHA1 provides insights into a catabolic powerhouse.</title>
        <authorList>
            <person name="McLeod M.P."/>
            <person name="Warren R.L."/>
            <person name="Hsiao W.W.L."/>
            <person name="Araki N."/>
            <person name="Myhre M."/>
            <person name="Fernandes C."/>
            <person name="Miyazawa D."/>
            <person name="Wong W."/>
            <person name="Lillquist A.L."/>
            <person name="Wang D."/>
            <person name="Dosanjh M."/>
            <person name="Hara H."/>
            <person name="Petrescu A."/>
            <person name="Morin R.D."/>
            <person name="Yang G."/>
            <person name="Stott J.M."/>
            <person name="Schein J.E."/>
            <person name="Shin H."/>
            <person name="Smailus D."/>
            <person name="Siddiqui A.S."/>
            <person name="Marra M.A."/>
            <person name="Jones S.J.M."/>
            <person name="Holt R."/>
            <person name="Brinkman F.S.L."/>
            <person name="Miyauchi K."/>
            <person name="Fukuda M."/>
            <person name="Davies J.E."/>
            <person name="Mohn W.W."/>
            <person name="Eltis L.D."/>
        </authorList>
    </citation>
    <scope>NUCLEOTIDE SEQUENCE [LARGE SCALE GENOMIC DNA]</scope>
    <source>
        <strain>RHA1</strain>
    </source>
</reference>
<dbReference type="EMBL" id="CP000431">
    <property type="protein sequence ID" value="ABG97925.1"/>
    <property type="molecule type" value="Genomic_DNA"/>
</dbReference>
<dbReference type="RefSeq" id="WP_009479371.1">
    <property type="nucleotide sequence ID" value="NC_008268.1"/>
</dbReference>
<dbReference type="SMR" id="Q0S3G1"/>
<dbReference type="KEGG" id="rha:RHA1_ro06148"/>
<dbReference type="eggNOG" id="COG0097">
    <property type="taxonomic scope" value="Bacteria"/>
</dbReference>
<dbReference type="HOGENOM" id="CLU_065464_1_2_11"/>
<dbReference type="OrthoDB" id="9805007at2"/>
<dbReference type="Proteomes" id="UP000008710">
    <property type="component" value="Chromosome"/>
</dbReference>
<dbReference type="GO" id="GO:0022625">
    <property type="term" value="C:cytosolic large ribosomal subunit"/>
    <property type="evidence" value="ECO:0007669"/>
    <property type="project" value="TreeGrafter"/>
</dbReference>
<dbReference type="GO" id="GO:0019843">
    <property type="term" value="F:rRNA binding"/>
    <property type="evidence" value="ECO:0007669"/>
    <property type="project" value="UniProtKB-UniRule"/>
</dbReference>
<dbReference type="GO" id="GO:0003735">
    <property type="term" value="F:structural constituent of ribosome"/>
    <property type="evidence" value="ECO:0007669"/>
    <property type="project" value="InterPro"/>
</dbReference>
<dbReference type="GO" id="GO:0002181">
    <property type="term" value="P:cytoplasmic translation"/>
    <property type="evidence" value="ECO:0007669"/>
    <property type="project" value="TreeGrafter"/>
</dbReference>
<dbReference type="FunFam" id="3.90.930.12:FF:000001">
    <property type="entry name" value="50S ribosomal protein L6"/>
    <property type="match status" value="1"/>
</dbReference>
<dbReference type="FunFam" id="3.90.930.12:FF:000002">
    <property type="entry name" value="50S ribosomal protein L6"/>
    <property type="match status" value="1"/>
</dbReference>
<dbReference type="Gene3D" id="3.90.930.12">
    <property type="entry name" value="Ribosomal protein L6, alpha-beta domain"/>
    <property type="match status" value="2"/>
</dbReference>
<dbReference type="HAMAP" id="MF_01365_B">
    <property type="entry name" value="Ribosomal_uL6_B"/>
    <property type="match status" value="1"/>
</dbReference>
<dbReference type="InterPro" id="IPR000702">
    <property type="entry name" value="Ribosomal_uL6-like"/>
</dbReference>
<dbReference type="InterPro" id="IPR036789">
    <property type="entry name" value="Ribosomal_uL6-like_a/b-dom_sf"/>
</dbReference>
<dbReference type="InterPro" id="IPR020040">
    <property type="entry name" value="Ribosomal_uL6_a/b-dom"/>
</dbReference>
<dbReference type="InterPro" id="IPR019906">
    <property type="entry name" value="Ribosomal_uL6_bac-type"/>
</dbReference>
<dbReference type="InterPro" id="IPR002358">
    <property type="entry name" value="Ribosomal_uL6_CS"/>
</dbReference>
<dbReference type="NCBIfam" id="TIGR03654">
    <property type="entry name" value="L6_bact"/>
    <property type="match status" value="1"/>
</dbReference>
<dbReference type="PANTHER" id="PTHR11655">
    <property type="entry name" value="60S/50S RIBOSOMAL PROTEIN L6/L9"/>
    <property type="match status" value="1"/>
</dbReference>
<dbReference type="PANTHER" id="PTHR11655:SF14">
    <property type="entry name" value="LARGE RIBOSOMAL SUBUNIT PROTEIN UL6M"/>
    <property type="match status" value="1"/>
</dbReference>
<dbReference type="Pfam" id="PF00347">
    <property type="entry name" value="Ribosomal_L6"/>
    <property type="match status" value="2"/>
</dbReference>
<dbReference type="PIRSF" id="PIRSF002162">
    <property type="entry name" value="Ribosomal_L6"/>
    <property type="match status" value="1"/>
</dbReference>
<dbReference type="PRINTS" id="PR00059">
    <property type="entry name" value="RIBOSOMALL6"/>
</dbReference>
<dbReference type="SUPFAM" id="SSF56053">
    <property type="entry name" value="Ribosomal protein L6"/>
    <property type="match status" value="2"/>
</dbReference>
<dbReference type="PROSITE" id="PS00525">
    <property type="entry name" value="RIBOSOMAL_L6_1"/>
    <property type="match status" value="1"/>
</dbReference>
<name>RL6_RHOJR</name>
<accession>Q0S3G1</accession>
<protein>
    <recommendedName>
        <fullName evidence="1">Large ribosomal subunit protein uL6</fullName>
    </recommendedName>
    <alternativeName>
        <fullName evidence="2">50S ribosomal protein L6</fullName>
    </alternativeName>
</protein>
<proteinExistence type="inferred from homology"/>
<evidence type="ECO:0000255" key="1">
    <source>
        <dbReference type="HAMAP-Rule" id="MF_01365"/>
    </source>
</evidence>
<evidence type="ECO:0000305" key="2"/>